<proteinExistence type="inferred from homology"/>
<name>KDSB_CHLAB</name>
<sequence>MEEQTFISKKVGVLPARWGSVRFPGKPLAMILGKSLIQRTYENIIQSETLDKVVVATDDQRIMDHVLDFGGACLMTSPECANGTERMAETVSRYFPEAEIMVNIQGDEPCLRHTVVDALVRKLEEHPEIQMVTPVAQTTDSHEILTNQKVKCVFDKNGKALYFSRSPIPHILKKETPIYLHIGVYAFRRSALFSYIASAPSPLSQAEDLEQLRVLEHGGSIHVCVVEAKSPSVDYPEDISKVEEYLTCHSSASF</sequence>
<gene>
    <name evidence="1" type="primary">kdsB</name>
    <name type="ordered locus">CAB569</name>
</gene>
<protein>
    <recommendedName>
        <fullName evidence="1">3-deoxy-manno-octulosonate cytidylyltransferase</fullName>
        <ecNumber evidence="1">2.7.7.38</ecNumber>
    </recommendedName>
    <alternativeName>
        <fullName evidence="1">CMP-2-keto-3-deoxyoctulosonic acid synthase</fullName>
        <shortName evidence="1">CKS</shortName>
        <shortName evidence="1">CMP-KDO synthase</shortName>
    </alternativeName>
</protein>
<comment type="function">
    <text evidence="1">Activates KDO (a required 8-carbon sugar) for incorporation into bacterial lipopolysaccharide in Gram-negative bacteria.</text>
</comment>
<comment type="catalytic activity">
    <reaction evidence="1">
        <text>3-deoxy-alpha-D-manno-oct-2-ulosonate + CTP = CMP-3-deoxy-beta-D-manno-octulosonate + diphosphate</text>
        <dbReference type="Rhea" id="RHEA:23448"/>
        <dbReference type="ChEBI" id="CHEBI:33019"/>
        <dbReference type="ChEBI" id="CHEBI:37563"/>
        <dbReference type="ChEBI" id="CHEBI:85986"/>
        <dbReference type="ChEBI" id="CHEBI:85987"/>
        <dbReference type="EC" id="2.7.7.38"/>
    </reaction>
</comment>
<comment type="pathway">
    <text evidence="1">Nucleotide-sugar biosynthesis; CMP-3-deoxy-D-manno-octulosonate biosynthesis; CMP-3-deoxy-D-manno-octulosonate from 3-deoxy-D-manno-octulosonate and CTP: step 1/1.</text>
</comment>
<comment type="pathway">
    <text evidence="1">Bacterial outer membrane biogenesis; lipopolysaccharide biosynthesis.</text>
</comment>
<comment type="subcellular location">
    <subcellularLocation>
        <location evidence="1">Cytoplasm</location>
    </subcellularLocation>
</comment>
<comment type="similarity">
    <text evidence="1">Belongs to the KdsB family.</text>
</comment>
<organism>
    <name type="scientific">Chlamydia abortus (strain DSM 27085 / S26/3)</name>
    <name type="common">Chlamydophila abortus</name>
    <dbReference type="NCBI Taxonomy" id="218497"/>
    <lineage>
        <taxon>Bacteria</taxon>
        <taxon>Pseudomonadati</taxon>
        <taxon>Chlamydiota</taxon>
        <taxon>Chlamydiia</taxon>
        <taxon>Chlamydiales</taxon>
        <taxon>Chlamydiaceae</taxon>
        <taxon>Chlamydia/Chlamydophila group</taxon>
        <taxon>Chlamydia</taxon>
    </lineage>
</organism>
<feature type="chain" id="PRO_1000003353" description="3-deoxy-manno-octulosonate cytidylyltransferase">
    <location>
        <begin position="1"/>
        <end position="254"/>
    </location>
</feature>
<reference key="1">
    <citation type="journal article" date="2005" name="Genome Res.">
        <title>The Chlamydophila abortus genome sequence reveals an array of variable proteins that contribute to interspecies variation.</title>
        <authorList>
            <person name="Thomson N.R."/>
            <person name="Yeats C."/>
            <person name="Bell K."/>
            <person name="Holden M.T.G."/>
            <person name="Bentley S.D."/>
            <person name="Livingstone M."/>
            <person name="Cerdeno-Tarraga A.-M."/>
            <person name="Harris B."/>
            <person name="Doggett J."/>
            <person name="Ormond D."/>
            <person name="Mungall K."/>
            <person name="Clarke K."/>
            <person name="Feltwell T."/>
            <person name="Hance Z."/>
            <person name="Sanders M."/>
            <person name="Quail M.A."/>
            <person name="Price C."/>
            <person name="Barrell B.G."/>
            <person name="Parkhill J."/>
            <person name="Longbottom D."/>
        </authorList>
    </citation>
    <scope>NUCLEOTIDE SEQUENCE [LARGE SCALE GENOMIC DNA]</scope>
    <source>
        <strain>DSM 27085 / S26/3</strain>
    </source>
</reference>
<keyword id="KW-0963">Cytoplasm</keyword>
<keyword id="KW-0448">Lipopolysaccharide biosynthesis</keyword>
<keyword id="KW-0548">Nucleotidyltransferase</keyword>
<keyword id="KW-0808">Transferase</keyword>
<evidence type="ECO:0000255" key="1">
    <source>
        <dbReference type="HAMAP-Rule" id="MF_00057"/>
    </source>
</evidence>
<accession>Q5L5S2</accession>
<dbReference type="EC" id="2.7.7.38" evidence="1"/>
<dbReference type="EMBL" id="CR848038">
    <property type="protein sequence ID" value="CAH64017.1"/>
    <property type="molecule type" value="Genomic_DNA"/>
</dbReference>
<dbReference type="RefSeq" id="WP_011097169.1">
    <property type="nucleotide sequence ID" value="NC_004552.2"/>
</dbReference>
<dbReference type="SMR" id="Q5L5S2"/>
<dbReference type="KEGG" id="cab:CAB569"/>
<dbReference type="eggNOG" id="COG1212">
    <property type="taxonomic scope" value="Bacteria"/>
</dbReference>
<dbReference type="HOGENOM" id="CLU_065038_0_1_0"/>
<dbReference type="OrthoDB" id="9815559at2"/>
<dbReference type="UniPathway" id="UPA00030"/>
<dbReference type="UniPathway" id="UPA00358">
    <property type="reaction ID" value="UER00476"/>
</dbReference>
<dbReference type="Proteomes" id="UP000001012">
    <property type="component" value="Chromosome"/>
</dbReference>
<dbReference type="GO" id="GO:0005829">
    <property type="term" value="C:cytosol"/>
    <property type="evidence" value="ECO:0007669"/>
    <property type="project" value="TreeGrafter"/>
</dbReference>
<dbReference type="GO" id="GO:0008690">
    <property type="term" value="F:3-deoxy-manno-octulosonate cytidylyltransferase activity"/>
    <property type="evidence" value="ECO:0007669"/>
    <property type="project" value="UniProtKB-UniRule"/>
</dbReference>
<dbReference type="GO" id="GO:0033468">
    <property type="term" value="P:CMP-keto-3-deoxy-D-manno-octulosonic acid biosynthetic process"/>
    <property type="evidence" value="ECO:0007669"/>
    <property type="project" value="UniProtKB-UniRule"/>
</dbReference>
<dbReference type="GO" id="GO:0009103">
    <property type="term" value="P:lipopolysaccharide biosynthetic process"/>
    <property type="evidence" value="ECO:0007669"/>
    <property type="project" value="UniProtKB-UniRule"/>
</dbReference>
<dbReference type="CDD" id="cd02517">
    <property type="entry name" value="CMP-KDO-Synthetase"/>
    <property type="match status" value="1"/>
</dbReference>
<dbReference type="FunFam" id="3.90.550.10:FF:000011">
    <property type="entry name" value="3-deoxy-manno-octulosonate cytidylyltransferase"/>
    <property type="match status" value="1"/>
</dbReference>
<dbReference type="Gene3D" id="3.90.550.10">
    <property type="entry name" value="Spore Coat Polysaccharide Biosynthesis Protein SpsA, Chain A"/>
    <property type="match status" value="1"/>
</dbReference>
<dbReference type="HAMAP" id="MF_00057">
    <property type="entry name" value="KdsB"/>
    <property type="match status" value="1"/>
</dbReference>
<dbReference type="InterPro" id="IPR003329">
    <property type="entry name" value="Cytidylyl_trans"/>
</dbReference>
<dbReference type="InterPro" id="IPR004528">
    <property type="entry name" value="KdsB"/>
</dbReference>
<dbReference type="InterPro" id="IPR029044">
    <property type="entry name" value="Nucleotide-diphossugar_trans"/>
</dbReference>
<dbReference type="NCBIfam" id="TIGR00466">
    <property type="entry name" value="kdsB"/>
    <property type="match status" value="1"/>
</dbReference>
<dbReference type="NCBIfam" id="NF003950">
    <property type="entry name" value="PRK05450.1-3"/>
    <property type="match status" value="1"/>
</dbReference>
<dbReference type="NCBIfam" id="NF003952">
    <property type="entry name" value="PRK05450.1-5"/>
    <property type="match status" value="1"/>
</dbReference>
<dbReference type="NCBIfam" id="NF009905">
    <property type="entry name" value="PRK13368.1"/>
    <property type="match status" value="1"/>
</dbReference>
<dbReference type="PANTHER" id="PTHR42866">
    <property type="entry name" value="3-DEOXY-MANNO-OCTULOSONATE CYTIDYLYLTRANSFERASE"/>
    <property type="match status" value="1"/>
</dbReference>
<dbReference type="PANTHER" id="PTHR42866:SF2">
    <property type="entry name" value="3-DEOXY-MANNO-OCTULOSONATE CYTIDYLYLTRANSFERASE, MITOCHONDRIAL"/>
    <property type="match status" value="1"/>
</dbReference>
<dbReference type="Pfam" id="PF02348">
    <property type="entry name" value="CTP_transf_3"/>
    <property type="match status" value="1"/>
</dbReference>
<dbReference type="SUPFAM" id="SSF53448">
    <property type="entry name" value="Nucleotide-diphospho-sugar transferases"/>
    <property type="match status" value="1"/>
</dbReference>